<gene>
    <name type="primary">yszA</name>
    <name type="ordered locus">BSU28099</name>
</gene>
<reference key="1">
    <citation type="journal article" date="1997" name="Nature">
        <title>The complete genome sequence of the Gram-positive bacterium Bacillus subtilis.</title>
        <authorList>
            <person name="Kunst F."/>
            <person name="Ogasawara N."/>
            <person name="Moszer I."/>
            <person name="Albertini A.M."/>
            <person name="Alloni G."/>
            <person name="Azevedo V."/>
            <person name="Bertero M.G."/>
            <person name="Bessieres P."/>
            <person name="Bolotin A."/>
            <person name="Borchert S."/>
            <person name="Borriss R."/>
            <person name="Boursier L."/>
            <person name="Brans A."/>
            <person name="Braun M."/>
            <person name="Brignell S.C."/>
            <person name="Bron S."/>
            <person name="Brouillet S."/>
            <person name="Bruschi C.V."/>
            <person name="Caldwell B."/>
            <person name="Capuano V."/>
            <person name="Carter N.M."/>
            <person name="Choi S.-K."/>
            <person name="Codani J.-J."/>
            <person name="Connerton I.F."/>
            <person name="Cummings N.J."/>
            <person name="Daniel R.A."/>
            <person name="Denizot F."/>
            <person name="Devine K.M."/>
            <person name="Duesterhoeft A."/>
            <person name="Ehrlich S.D."/>
            <person name="Emmerson P.T."/>
            <person name="Entian K.-D."/>
            <person name="Errington J."/>
            <person name="Fabret C."/>
            <person name="Ferrari E."/>
            <person name="Foulger D."/>
            <person name="Fritz C."/>
            <person name="Fujita M."/>
            <person name="Fujita Y."/>
            <person name="Fuma S."/>
            <person name="Galizzi A."/>
            <person name="Galleron N."/>
            <person name="Ghim S.-Y."/>
            <person name="Glaser P."/>
            <person name="Goffeau A."/>
            <person name="Golightly E.J."/>
            <person name="Grandi G."/>
            <person name="Guiseppi G."/>
            <person name="Guy B.J."/>
            <person name="Haga K."/>
            <person name="Haiech J."/>
            <person name="Harwood C.R."/>
            <person name="Henaut A."/>
            <person name="Hilbert H."/>
            <person name="Holsappel S."/>
            <person name="Hosono S."/>
            <person name="Hullo M.-F."/>
            <person name="Itaya M."/>
            <person name="Jones L.-M."/>
            <person name="Joris B."/>
            <person name="Karamata D."/>
            <person name="Kasahara Y."/>
            <person name="Klaerr-Blanchard M."/>
            <person name="Klein C."/>
            <person name="Kobayashi Y."/>
            <person name="Koetter P."/>
            <person name="Koningstein G."/>
            <person name="Krogh S."/>
            <person name="Kumano M."/>
            <person name="Kurita K."/>
            <person name="Lapidus A."/>
            <person name="Lardinois S."/>
            <person name="Lauber J."/>
            <person name="Lazarevic V."/>
            <person name="Lee S.-M."/>
            <person name="Levine A."/>
            <person name="Liu H."/>
            <person name="Masuda S."/>
            <person name="Mauel C."/>
            <person name="Medigue C."/>
            <person name="Medina N."/>
            <person name="Mellado R.P."/>
            <person name="Mizuno M."/>
            <person name="Moestl D."/>
            <person name="Nakai S."/>
            <person name="Noback M."/>
            <person name="Noone D."/>
            <person name="O'Reilly M."/>
            <person name="Ogawa K."/>
            <person name="Ogiwara A."/>
            <person name="Oudega B."/>
            <person name="Park S.-H."/>
            <person name="Parro V."/>
            <person name="Pohl T.M."/>
            <person name="Portetelle D."/>
            <person name="Porwollik S."/>
            <person name="Prescott A.M."/>
            <person name="Presecan E."/>
            <person name="Pujic P."/>
            <person name="Purnelle B."/>
            <person name="Rapoport G."/>
            <person name="Rey M."/>
            <person name="Reynolds S."/>
            <person name="Rieger M."/>
            <person name="Rivolta C."/>
            <person name="Rocha E."/>
            <person name="Roche B."/>
            <person name="Rose M."/>
            <person name="Sadaie Y."/>
            <person name="Sato T."/>
            <person name="Scanlan E."/>
            <person name="Schleich S."/>
            <person name="Schroeter R."/>
            <person name="Scoffone F."/>
            <person name="Sekiguchi J."/>
            <person name="Sekowska A."/>
            <person name="Seror S.J."/>
            <person name="Serror P."/>
            <person name="Shin B.-S."/>
            <person name="Soldo B."/>
            <person name="Sorokin A."/>
            <person name="Tacconi E."/>
            <person name="Takagi T."/>
            <person name="Takahashi H."/>
            <person name="Takemaru K."/>
            <person name="Takeuchi M."/>
            <person name="Tamakoshi A."/>
            <person name="Tanaka T."/>
            <person name="Terpstra P."/>
            <person name="Tognoni A."/>
            <person name="Tosato V."/>
            <person name="Uchiyama S."/>
            <person name="Vandenbol M."/>
            <person name="Vannier F."/>
            <person name="Vassarotti A."/>
            <person name="Viari A."/>
            <person name="Wambutt R."/>
            <person name="Wedler E."/>
            <person name="Wedler H."/>
            <person name="Weitzenegger T."/>
            <person name="Winters P."/>
            <person name="Wipat A."/>
            <person name="Yamamoto H."/>
            <person name="Yamane K."/>
            <person name="Yasumoto K."/>
            <person name="Yata K."/>
            <person name="Yoshida K."/>
            <person name="Yoshikawa H.-F."/>
            <person name="Zumstein E."/>
            <person name="Yoshikawa H."/>
            <person name="Danchin A."/>
        </authorList>
    </citation>
    <scope>NUCLEOTIDE SEQUENCE [LARGE SCALE GENOMIC DNA]</scope>
    <source>
        <strain>168</strain>
    </source>
</reference>
<comment type="subcellular location">
    <subcellularLocation>
        <location evidence="2">Cell membrane</location>
        <topology evidence="2">Single-pass membrane protein</topology>
    </subcellularLocation>
</comment>
<protein>
    <recommendedName>
        <fullName>Uncharacterized membrane protein YszA</fullName>
    </recommendedName>
</protein>
<accession>C0H465</accession>
<name>YSZA_BACSU</name>
<sequence length="63" mass="7347">MKKRFSSYSLPPWVRQIRLVSAQVIIPITIFQGIRTIFFPTTFDVLLLAILIFLACALHLEWI</sequence>
<dbReference type="EMBL" id="AL009126">
    <property type="protein sequence ID" value="CAX52676.1"/>
    <property type="molecule type" value="Genomic_DNA"/>
</dbReference>
<dbReference type="RefSeq" id="WP_003222590.1">
    <property type="nucleotide sequence ID" value="NZ_OZ025638.1"/>
</dbReference>
<dbReference type="RefSeq" id="YP_003097770.1">
    <property type="nucleotide sequence ID" value="NC_000964.3"/>
</dbReference>
<dbReference type="SMR" id="C0H465"/>
<dbReference type="PaxDb" id="224308-BSU28099"/>
<dbReference type="EnsemblBacteria" id="CAX52676">
    <property type="protein sequence ID" value="CAX52676"/>
    <property type="gene ID" value="BSU_28099"/>
</dbReference>
<dbReference type="GeneID" id="8302989"/>
<dbReference type="KEGG" id="bsu:BSU28099"/>
<dbReference type="PATRIC" id="fig|224308.179.peg.3052"/>
<dbReference type="eggNOG" id="ENOG5033KD9">
    <property type="taxonomic scope" value="Bacteria"/>
</dbReference>
<dbReference type="InParanoid" id="C0H465"/>
<dbReference type="OrthoDB" id="2456214at2"/>
<dbReference type="BioCyc" id="BSUB:BSU28099-MONOMER"/>
<dbReference type="Proteomes" id="UP000001570">
    <property type="component" value="Chromosome"/>
</dbReference>
<dbReference type="GO" id="GO:0005886">
    <property type="term" value="C:plasma membrane"/>
    <property type="evidence" value="ECO:0007669"/>
    <property type="project" value="UniProtKB-SubCell"/>
</dbReference>
<evidence type="ECO:0000255" key="1"/>
<evidence type="ECO:0000305" key="2"/>
<proteinExistence type="predicted"/>
<organism>
    <name type="scientific">Bacillus subtilis (strain 168)</name>
    <dbReference type="NCBI Taxonomy" id="224308"/>
    <lineage>
        <taxon>Bacteria</taxon>
        <taxon>Bacillati</taxon>
        <taxon>Bacillota</taxon>
        <taxon>Bacilli</taxon>
        <taxon>Bacillales</taxon>
        <taxon>Bacillaceae</taxon>
        <taxon>Bacillus</taxon>
    </lineage>
</organism>
<feature type="chain" id="PRO_0000382214" description="Uncharacterized membrane protein YszA">
    <location>
        <begin position="1"/>
        <end position="63"/>
    </location>
</feature>
<feature type="transmembrane region" description="Helical" evidence="1">
    <location>
        <begin position="37"/>
        <end position="57"/>
    </location>
</feature>
<keyword id="KW-1003">Cell membrane</keyword>
<keyword id="KW-0472">Membrane</keyword>
<keyword id="KW-1185">Reference proteome</keyword>
<keyword id="KW-0812">Transmembrane</keyword>
<keyword id="KW-1133">Transmembrane helix</keyword>